<dbReference type="EMBL" id="CP000728">
    <property type="protein sequence ID" value="ABS41523.1"/>
    <property type="molecule type" value="Genomic_DNA"/>
</dbReference>
<dbReference type="RefSeq" id="WP_003357650.1">
    <property type="nucleotide sequence ID" value="NC_009699.1"/>
</dbReference>
<dbReference type="SMR" id="A7GJ74"/>
<dbReference type="KEGG" id="cbf:CLI_3663"/>
<dbReference type="HOGENOM" id="CLU_044142_4_1_9"/>
<dbReference type="Proteomes" id="UP000002410">
    <property type="component" value="Chromosome"/>
</dbReference>
<dbReference type="GO" id="GO:0022625">
    <property type="term" value="C:cytosolic large ribosomal subunit"/>
    <property type="evidence" value="ECO:0007669"/>
    <property type="project" value="TreeGrafter"/>
</dbReference>
<dbReference type="GO" id="GO:0019843">
    <property type="term" value="F:rRNA binding"/>
    <property type="evidence" value="ECO:0007669"/>
    <property type="project" value="UniProtKB-UniRule"/>
</dbReference>
<dbReference type="GO" id="GO:0003735">
    <property type="term" value="F:structural constituent of ribosome"/>
    <property type="evidence" value="ECO:0007669"/>
    <property type="project" value="InterPro"/>
</dbReference>
<dbReference type="GO" id="GO:0006412">
    <property type="term" value="P:translation"/>
    <property type="evidence" value="ECO:0007669"/>
    <property type="project" value="UniProtKB-UniRule"/>
</dbReference>
<dbReference type="FunFam" id="2.40.30.10:FF:000004">
    <property type="entry name" value="50S ribosomal protein L3"/>
    <property type="match status" value="1"/>
</dbReference>
<dbReference type="FunFam" id="3.30.160.810:FF:000001">
    <property type="entry name" value="50S ribosomal protein L3"/>
    <property type="match status" value="1"/>
</dbReference>
<dbReference type="Gene3D" id="3.30.160.810">
    <property type="match status" value="1"/>
</dbReference>
<dbReference type="Gene3D" id="2.40.30.10">
    <property type="entry name" value="Translation factors"/>
    <property type="match status" value="1"/>
</dbReference>
<dbReference type="HAMAP" id="MF_01325_B">
    <property type="entry name" value="Ribosomal_uL3_B"/>
    <property type="match status" value="1"/>
</dbReference>
<dbReference type="InterPro" id="IPR000597">
    <property type="entry name" value="Ribosomal_uL3"/>
</dbReference>
<dbReference type="InterPro" id="IPR019927">
    <property type="entry name" value="Ribosomal_uL3_bac/org-type"/>
</dbReference>
<dbReference type="InterPro" id="IPR019926">
    <property type="entry name" value="Ribosomal_uL3_CS"/>
</dbReference>
<dbReference type="InterPro" id="IPR009000">
    <property type="entry name" value="Transl_B-barrel_sf"/>
</dbReference>
<dbReference type="NCBIfam" id="TIGR03625">
    <property type="entry name" value="L3_bact"/>
    <property type="match status" value="1"/>
</dbReference>
<dbReference type="PANTHER" id="PTHR11229">
    <property type="entry name" value="50S RIBOSOMAL PROTEIN L3"/>
    <property type="match status" value="1"/>
</dbReference>
<dbReference type="PANTHER" id="PTHR11229:SF16">
    <property type="entry name" value="LARGE RIBOSOMAL SUBUNIT PROTEIN UL3C"/>
    <property type="match status" value="1"/>
</dbReference>
<dbReference type="Pfam" id="PF00297">
    <property type="entry name" value="Ribosomal_L3"/>
    <property type="match status" value="1"/>
</dbReference>
<dbReference type="SUPFAM" id="SSF50447">
    <property type="entry name" value="Translation proteins"/>
    <property type="match status" value="1"/>
</dbReference>
<dbReference type="PROSITE" id="PS00474">
    <property type="entry name" value="RIBOSOMAL_L3"/>
    <property type="match status" value="1"/>
</dbReference>
<organism>
    <name type="scientific">Clostridium botulinum (strain Langeland / NCTC 10281 / Type F)</name>
    <dbReference type="NCBI Taxonomy" id="441772"/>
    <lineage>
        <taxon>Bacteria</taxon>
        <taxon>Bacillati</taxon>
        <taxon>Bacillota</taxon>
        <taxon>Clostridia</taxon>
        <taxon>Eubacteriales</taxon>
        <taxon>Clostridiaceae</taxon>
        <taxon>Clostridium</taxon>
    </lineage>
</organism>
<name>RL3_CLOBL</name>
<keyword id="KW-0687">Ribonucleoprotein</keyword>
<keyword id="KW-0689">Ribosomal protein</keyword>
<keyword id="KW-0694">RNA-binding</keyword>
<keyword id="KW-0699">rRNA-binding</keyword>
<proteinExistence type="inferred from homology"/>
<comment type="function">
    <text evidence="1">One of the primary rRNA binding proteins, it binds directly near the 3'-end of the 23S rRNA, where it nucleates assembly of the 50S subunit.</text>
</comment>
<comment type="subunit">
    <text evidence="1">Part of the 50S ribosomal subunit. Forms a cluster with proteins L14 and L19.</text>
</comment>
<comment type="similarity">
    <text evidence="1">Belongs to the universal ribosomal protein uL3 family.</text>
</comment>
<evidence type="ECO:0000255" key="1">
    <source>
        <dbReference type="HAMAP-Rule" id="MF_01325"/>
    </source>
</evidence>
<evidence type="ECO:0000256" key="2">
    <source>
        <dbReference type="SAM" id="MobiDB-lite"/>
    </source>
</evidence>
<evidence type="ECO:0000305" key="3"/>
<accession>A7GJ74</accession>
<gene>
    <name evidence="1" type="primary">rplC</name>
    <name type="ordered locus">CLI_3663</name>
</gene>
<sequence length="209" mass="22846">MKKAILGKKLGMTQIFNENGKVIPVTVIEAGPCTVIQKKTVEKDGYEAIQVAFGDIREKLRNKPVKGHFAKAGVSVKRHIKEFKLEDSNSLEIGQEIKADVFEAGERVDISGVSKGKGFQGTIRRWNAHRGPMSHGSKFHRAVGSMGASSDPSRTFKNKRMPGHMGNVNTTVLNLEVVRIIPEKNLILIKGGVPGPNKGLVQIRNTVKA</sequence>
<protein>
    <recommendedName>
        <fullName evidence="1">Large ribosomal subunit protein uL3</fullName>
    </recommendedName>
    <alternativeName>
        <fullName evidence="3">50S ribosomal protein L3</fullName>
    </alternativeName>
</protein>
<feature type="chain" id="PRO_1000052034" description="Large ribosomal subunit protein uL3">
    <location>
        <begin position="1"/>
        <end position="209"/>
    </location>
</feature>
<feature type="region of interest" description="Disordered" evidence="2">
    <location>
        <begin position="141"/>
        <end position="163"/>
    </location>
</feature>
<reference key="1">
    <citation type="submission" date="2007-06" db="EMBL/GenBank/DDBJ databases">
        <authorList>
            <person name="Brinkac L.M."/>
            <person name="Daugherty S."/>
            <person name="Dodson R.J."/>
            <person name="Madupu R."/>
            <person name="Brown J.L."/>
            <person name="Bruce D."/>
            <person name="Detter C."/>
            <person name="Munk C."/>
            <person name="Smith L.A."/>
            <person name="Smith T.J."/>
            <person name="White O."/>
            <person name="Brettin T.S."/>
        </authorList>
    </citation>
    <scope>NUCLEOTIDE SEQUENCE [LARGE SCALE GENOMIC DNA]</scope>
    <source>
        <strain>Langeland / NCTC 10281 / Type F</strain>
    </source>
</reference>